<proteinExistence type="inferred from homology"/>
<name>ILVC_ACTPJ</name>
<reference key="1">
    <citation type="journal article" date="2008" name="PLoS ONE">
        <title>Genome biology of Actinobacillus pleuropneumoniae JL03, an isolate of serotype 3 prevalent in China.</title>
        <authorList>
            <person name="Xu Z."/>
            <person name="Zhou Y."/>
            <person name="Li L."/>
            <person name="Zhou R."/>
            <person name="Xiao S."/>
            <person name="Wan Y."/>
            <person name="Zhang S."/>
            <person name="Wang K."/>
            <person name="Li W."/>
            <person name="Li L."/>
            <person name="Jin H."/>
            <person name="Kang M."/>
            <person name="Dalai B."/>
            <person name="Li T."/>
            <person name="Liu L."/>
            <person name="Cheng Y."/>
            <person name="Zhang L."/>
            <person name="Xu T."/>
            <person name="Zheng H."/>
            <person name="Pu S."/>
            <person name="Wang B."/>
            <person name="Gu W."/>
            <person name="Zhang X.L."/>
            <person name="Zhu G.-F."/>
            <person name="Wang S."/>
            <person name="Zhao G.-P."/>
            <person name="Chen H."/>
        </authorList>
    </citation>
    <scope>NUCLEOTIDE SEQUENCE [LARGE SCALE GENOMIC DNA]</scope>
    <source>
        <strain>JL03</strain>
    </source>
</reference>
<gene>
    <name evidence="1" type="primary">ilvC</name>
    <name type="ordered locus">APJL_1897</name>
</gene>
<sequence length="493" mass="54393">MANYFNTLNLRQKLDQLGRCRFMDRNEFADGCNFLKGKKIVIVGCGAQGLNQGLNMRDSGLDISYALRAEAIAEKRASFTRATENGFKVGTYQELIPTADLVINLTPDKQHSKVVADVVPLMKQGSAFGYSHGFNIVEEGEQIRKDITVVMTAPKCPGTEVREEYKRGFGVPTLIAVHPENDPKGEGMAIAKAWASATGGDRAGVLESSFVAEVKSDLMGEQTILCGMLQAGSIVCYDKLVADGKDPAYASKLIQYGWETITEALKQGGITLMMDRLSNAAKIRAFELSEEIKVQLNDLYLKHMDDIISGEFSSTMMADWANGDVNLFKWREETGKTAFENSPKADGIKISEQEYFDNGVVMVAMVKAGVEMAFDAMVASGIYEESAYYESLHELPLIANTIARKRLYEMNVVISDTAEYGNYLFSHVATPILAEKLIPMLQKGDLGEPTPAAEIDNVYLRDINDAIRNHPVELIGQELRGYMTDMKRISSQG</sequence>
<keyword id="KW-0028">Amino-acid biosynthesis</keyword>
<keyword id="KW-0100">Branched-chain amino acid biosynthesis</keyword>
<keyword id="KW-0460">Magnesium</keyword>
<keyword id="KW-0479">Metal-binding</keyword>
<keyword id="KW-0521">NADP</keyword>
<keyword id="KW-0560">Oxidoreductase</keyword>
<keyword id="KW-0677">Repeat</keyword>
<organism>
    <name type="scientific">Actinobacillus pleuropneumoniae serotype 3 (strain JL03)</name>
    <dbReference type="NCBI Taxonomy" id="434271"/>
    <lineage>
        <taxon>Bacteria</taxon>
        <taxon>Pseudomonadati</taxon>
        <taxon>Pseudomonadota</taxon>
        <taxon>Gammaproteobacteria</taxon>
        <taxon>Pasteurellales</taxon>
        <taxon>Pasteurellaceae</taxon>
        <taxon>Actinobacillus</taxon>
    </lineage>
</organism>
<comment type="function">
    <text evidence="1">Involved in the biosynthesis of branched-chain amino acids (BCAA). Catalyzes an alkyl-migration followed by a ketol-acid reduction of (S)-2-acetolactate (S2AL) to yield (R)-2,3-dihydroxy-isovalerate. In the isomerase reaction, S2AL is rearranged via a Mg-dependent methyl migration to produce 3-hydroxy-3-methyl-2-ketobutyrate (HMKB). In the reductase reaction, this 2-ketoacid undergoes a metal-dependent reduction by NADPH to yield (R)-2,3-dihydroxy-isovalerate.</text>
</comment>
<comment type="catalytic activity">
    <reaction evidence="1">
        <text>(2R)-2,3-dihydroxy-3-methylbutanoate + NADP(+) = (2S)-2-acetolactate + NADPH + H(+)</text>
        <dbReference type="Rhea" id="RHEA:22068"/>
        <dbReference type="ChEBI" id="CHEBI:15378"/>
        <dbReference type="ChEBI" id="CHEBI:49072"/>
        <dbReference type="ChEBI" id="CHEBI:57783"/>
        <dbReference type="ChEBI" id="CHEBI:58349"/>
        <dbReference type="ChEBI" id="CHEBI:58476"/>
        <dbReference type="EC" id="1.1.1.86"/>
    </reaction>
</comment>
<comment type="catalytic activity">
    <reaction evidence="1">
        <text>(2R,3R)-2,3-dihydroxy-3-methylpentanoate + NADP(+) = (S)-2-ethyl-2-hydroxy-3-oxobutanoate + NADPH + H(+)</text>
        <dbReference type="Rhea" id="RHEA:13493"/>
        <dbReference type="ChEBI" id="CHEBI:15378"/>
        <dbReference type="ChEBI" id="CHEBI:49256"/>
        <dbReference type="ChEBI" id="CHEBI:49258"/>
        <dbReference type="ChEBI" id="CHEBI:57783"/>
        <dbReference type="ChEBI" id="CHEBI:58349"/>
        <dbReference type="EC" id="1.1.1.86"/>
    </reaction>
</comment>
<comment type="cofactor">
    <cofactor evidence="1">
        <name>Mg(2+)</name>
        <dbReference type="ChEBI" id="CHEBI:18420"/>
    </cofactor>
    <text evidence="1">Binds 2 magnesium ions per subunit.</text>
</comment>
<comment type="pathway">
    <text evidence="1">Amino-acid biosynthesis; L-isoleucine biosynthesis; L-isoleucine from 2-oxobutanoate: step 2/4.</text>
</comment>
<comment type="pathway">
    <text evidence="1">Amino-acid biosynthesis; L-valine biosynthesis; L-valine from pyruvate: step 2/4.</text>
</comment>
<comment type="similarity">
    <text evidence="1">Belongs to the ketol-acid reductoisomerase family.</text>
</comment>
<evidence type="ECO:0000255" key="1">
    <source>
        <dbReference type="HAMAP-Rule" id="MF_00435"/>
    </source>
</evidence>
<evidence type="ECO:0000255" key="2">
    <source>
        <dbReference type="PROSITE-ProRule" id="PRU01197"/>
    </source>
</evidence>
<evidence type="ECO:0000255" key="3">
    <source>
        <dbReference type="PROSITE-ProRule" id="PRU01198"/>
    </source>
</evidence>
<protein>
    <recommendedName>
        <fullName evidence="1">Ketol-acid reductoisomerase (NADP(+))</fullName>
        <shortName evidence="1">KARI</shortName>
        <ecNumber evidence="1">1.1.1.86</ecNumber>
    </recommendedName>
    <alternativeName>
        <fullName evidence="1">Acetohydroxy-acid isomeroreductase</fullName>
        <shortName evidence="1">AHIR</shortName>
    </alternativeName>
    <alternativeName>
        <fullName evidence="1">Alpha-keto-beta-hydroxylacyl reductoisomerase</fullName>
    </alternativeName>
    <alternativeName>
        <fullName evidence="1">Ketol-acid reductoisomerase type 2</fullName>
    </alternativeName>
    <alternativeName>
        <fullName evidence="1">Ketol-acid reductoisomerase type II</fullName>
    </alternativeName>
</protein>
<dbReference type="EC" id="1.1.1.86" evidence="1"/>
<dbReference type="EMBL" id="CP000687">
    <property type="protein sequence ID" value="ABY70447.1"/>
    <property type="molecule type" value="Genomic_DNA"/>
</dbReference>
<dbReference type="RefSeq" id="WP_005602730.1">
    <property type="nucleotide sequence ID" value="NC_010278.1"/>
</dbReference>
<dbReference type="SMR" id="B0BTD3"/>
<dbReference type="KEGG" id="apj:APJL_1897"/>
<dbReference type="HOGENOM" id="CLU_551905_0_0_6"/>
<dbReference type="UniPathway" id="UPA00047">
    <property type="reaction ID" value="UER00056"/>
</dbReference>
<dbReference type="UniPathway" id="UPA00049">
    <property type="reaction ID" value="UER00060"/>
</dbReference>
<dbReference type="Proteomes" id="UP000008547">
    <property type="component" value="Chromosome"/>
</dbReference>
<dbReference type="GO" id="GO:0005829">
    <property type="term" value="C:cytosol"/>
    <property type="evidence" value="ECO:0007669"/>
    <property type="project" value="TreeGrafter"/>
</dbReference>
<dbReference type="GO" id="GO:0004455">
    <property type="term" value="F:ketol-acid reductoisomerase activity"/>
    <property type="evidence" value="ECO:0007669"/>
    <property type="project" value="UniProtKB-UniRule"/>
</dbReference>
<dbReference type="GO" id="GO:0000287">
    <property type="term" value="F:magnesium ion binding"/>
    <property type="evidence" value="ECO:0007669"/>
    <property type="project" value="UniProtKB-UniRule"/>
</dbReference>
<dbReference type="GO" id="GO:0009097">
    <property type="term" value="P:isoleucine biosynthetic process"/>
    <property type="evidence" value="ECO:0007669"/>
    <property type="project" value="UniProtKB-UniRule"/>
</dbReference>
<dbReference type="GO" id="GO:0009099">
    <property type="term" value="P:L-valine biosynthetic process"/>
    <property type="evidence" value="ECO:0007669"/>
    <property type="project" value="UniProtKB-UniRule"/>
</dbReference>
<dbReference type="FunFam" id="1.10.1040.10:FF:000007">
    <property type="entry name" value="Ketol-acid reductoisomerase (NADP(+))"/>
    <property type="match status" value="1"/>
</dbReference>
<dbReference type="FunFam" id="3.40.50.720:FF:000043">
    <property type="entry name" value="Ketol-acid reductoisomerase (NADP(+))"/>
    <property type="match status" value="1"/>
</dbReference>
<dbReference type="Gene3D" id="1.10.1040.10">
    <property type="entry name" value="N-(1-d-carboxylethyl)-l-norvaline Dehydrogenase, domain 2"/>
    <property type="match status" value="1"/>
</dbReference>
<dbReference type="Gene3D" id="3.40.50.720">
    <property type="entry name" value="NAD(P)-binding Rossmann-like Domain"/>
    <property type="match status" value="1"/>
</dbReference>
<dbReference type="HAMAP" id="MF_00435">
    <property type="entry name" value="IlvC"/>
    <property type="match status" value="1"/>
</dbReference>
<dbReference type="InterPro" id="IPR008927">
    <property type="entry name" value="6-PGluconate_DH-like_C_sf"/>
</dbReference>
<dbReference type="InterPro" id="IPR013328">
    <property type="entry name" value="6PGD_dom2"/>
</dbReference>
<dbReference type="InterPro" id="IPR013023">
    <property type="entry name" value="KARI"/>
</dbReference>
<dbReference type="InterPro" id="IPR000506">
    <property type="entry name" value="KARI_C"/>
</dbReference>
<dbReference type="InterPro" id="IPR013116">
    <property type="entry name" value="KARI_N"/>
</dbReference>
<dbReference type="InterPro" id="IPR036291">
    <property type="entry name" value="NAD(P)-bd_dom_sf"/>
</dbReference>
<dbReference type="NCBIfam" id="TIGR00465">
    <property type="entry name" value="ilvC"/>
    <property type="match status" value="1"/>
</dbReference>
<dbReference type="NCBIfam" id="NF003557">
    <property type="entry name" value="PRK05225.1"/>
    <property type="match status" value="1"/>
</dbReference>
<dbReference type="PANTHER" id="PTHR21371">
    <property type="entry name" value="KETOL-ACID REDUCTOISOMERASE, MITOCHONDRIAL"/>
    <property type="match status" value="1"/>
</dbReference>
<dbReference type="PANTHER" id="PTHR21371:SF1">
    <property type="entry name" value="KETOL-ACID REDUCTOISOMERASE, MITOCHONDRIAL"/>
    <property type="match status" value="1"/>
</dbReference>
<dbReference type="Pfam" id="PF01450">
    <property type="entry name" value="KARI_C"/>
    <property type="match status" value="2"/>
</dbReference>
<dbReference type="Pfam" id="PF07991">
    <property type="entry name" value="KARI_N"/>
    <property type="match status" value="1"/>
</dbReference>
<dbReference type="SUPFAM" id="SSF48179">
    <property type="entry name" value="6-phosphogluconate dehydrogenase C-terminal domain-like"/>
    <property type="match status" value="2"/>
</dbReference>
<dbReference type="SUPFAM" id="SSF51735">
    <property type="entry name" value="NAD(P)-binding Rossmann-fold domains"/>
    <property type="match status" value="1"/>
</dbReference>
<dbReference type="PROSITE" id="PS51851">
    <property type="entry name" value="KARI_C"/>
    <property type="match status" value="2"/>
</dbReference>
<dbReference type="PROSITE" id="PS51850">
    <property type="entry name" value="KARI_N"/>
    <property type="match status" value="1"/>
</dbReference>
<accession>B0BTD3</accession>
<feature type="chain" id="PRO_1000124248" description="Ketol-acid reductoisomerase (NADP(+))">
    <location>
        <begin position="1"/>
        <end position="493"/>
    </location>
</feature>
<feature type="domain" description="KARI N-terminal Rossmann" evidence="2">
    <location>
        <begin position="14"/>
        <end position="208"/>
    </location>
</feature>
<feature type="domain" description="KARI C-terminal knotted 1" evidence="3">
    <location>
        <begin position="209"/>
        <end position="345"/>
    </location>
</feature>
<feature type="domain" description="KARI C-terminal knotted 2" evidence="3">
    <location>
        <begin position="346"/>
        <end position="486"/>
    </location>
</feature>
<feature type="active site" evidence="1">
    <location>
        <position position="132"/>
    </location>
</feature>
<feature type="binding site" evidence="1">
    <location>
        <begin position="45"/>
        <end position="48"/>
    </location>
    <ligand>
        <name>NADP(+)</name>
        <dbReference type="ChEBI" id="CHEBI:58349"/>
    </ligand>
</feature>
<feature type="binding site" evidence="1">
    <location>
        <position position="68"/>
    </location>
    <ligand>
        <name>NADP(+)</name>
        <dbReference type="ChEBI" id="CHEBI:58349"/>
    </ligand>
</feature>
<feature type="binding site" evidence="1">
    <location>
        <position position="76"/>
    </location>
    <ligand>
        <name>NADP(+)</name>
        <dbReference type="ChEBI" id="CHEBI:58349"/>
    </ligand>
</feature>
<feature type="binding site" evidence="1">
    <location>
        <position position="78"/>
    </location>
    <ligand>
        <name>NADP(+)</name>
        <dbReference type="ChEBI" id="CHEBI:58349"/>
    </ligand>
</feature>
<feature type="binding site" evidence="1">
    <location>
        <begin position="108"/>
        <end position="110"/>
    </location>
    <ligand>
        <name>NADP(+)</name>
        <dbReference type="ChEBI" id="CHEBI:58349"/>
    </ligand>
</feature>
<feature type="binding site" evidence="1">
    <location>
        <position position="158"/>
    </location>
    <ligand>
        <name>NADP(+)</name>
        <dbReference type="ChEBI" id="CHEBI:58349"/>
    </ligand>
</feature>
<feature type="binding site" evidence="1">
    <location>
        <position position="217"/>
    </location>
    <ligand>
        <name>Mg(2+)</name>
        <dbReference type="ChEBI" id="CHEBI:18420"/>
        <label>1</label>
    </ligand>
</feature>
<feature type="binding site" evidence="1">
    <location>
        <position position="217"/>
    </location>
    <ligand>
        <name>Mg(2+)</name>
        <dbReference type="ChEBI" id="CHEBI:18420"/>
        <label>2</label>
    </ligand>
</feature>
<feature type="binding site" evidence="1">
    <location>
        <position position="221"/>
    </location>
    <ligand>
        <name>Mg(2+)</name>
        <dbReference type="ChEBI" id="CHEBI:18420"/>
        <label>1</label>
    </ligand>
</feature>
<feature type="binding site" evidence="1">
    <location>
        <position position="390"/>
    </location>
    <ligand>
        <name>Mg(2+)</name>
        <dbReference type="ChEBI" id="CHEBI:18420"/>
        <label>2</label>
    </ligand>
</feature>
<feature type="binding site" evidence="1">
    <location>
        <position position="394"/>
    </location>
    <ligand>
        <name>Mg(2+)</name>
        <dbReference type="ChEBI" id="CHEBI:18420"/>
        <label>2</label>
    </ligand>
</feature>
<feature type="binding site" evidence="1">
    <location>
        <position position="415"/>
    </location>
    <ligand>
        <name>substrate</name>
    </ligand>
</feature>